<evidence type="ECO:0000255" key="1">
    <source>
        <dbReference type="HAMAP-Rule" id="MF_00378"/>
    </source>
</evidence>
<proteinExistence type="inferred from homology"/>
<gene>
    <name evidence="1" type="primary">xseA</name>
    <name type="ordered locus">CLK_1275</name>
</gene>
<name>EX7L_CLOBM</name>
<keyword id="KW-0963">Cytoplasm</keyword>
<keyword id="KW-0269">Exonuclease</keyword>
<keyword id="KW-0378">Hydrolase</keyword>
<keyword id="KW-0540">Nuclease</keyword>
<sequence length="401" mass="45338">MHIKTLTVSQLNRYVKNTLDADFILNNASVKGEISNLKIHSSGHIYFSLKDGGSKINCVMFKSYAYNLKFALENGMDVVALGNVSVYEKEGSYQLYVKDMKREGIGDLYVAFEKLKEKLKEEGLFDDAHKKEIPKFSKKIGVITSPTGAAIKDIINVTKRRNKGIELLIYPALVQGTDASKTLIEGIKTLNKVEDVDIIILARGGGSIEELWAFNNEELAYAVYNSKKPIITGVGHETDFTIIDFVSDRRAPTPSAAAEIAAFDREVLINEILNYKYNIKNSMENIIKEKRNYLNLYKQKIEANSPTNIIANEYRNIDNLKELLNMKIEGKLNKEKNNLSRLSSLLEAHNPLNVLKKGYTLIEDEGNNLITEKEALKELNKINIIFKDGRAKLSIKYIEEF</sequence>
<feature type="chain" id="PRO_1000122051" description="Exodeoxyribonuclease 7 large subunit">
    <location>
        <begin position="1"/>
        <end position="401"/>
    </location>
</feature>
<comment type="function">
    <text evidence="1">Bidirectionally degrades single-stranded DNA into large acid-insoluble oligonucleotides, which are then degraded further into small acid-soluble oligonucleotides.</text>
</comment>
<comment type="catalytic activity">
    <reaction evidence="1">
        <text>Exonucleolytic cleavage in either 5'- to 3'- or 3'- to 5'-direction to yield nucleoside 5'-phosphates.</text>
        <dbReference type="EC" id="3.1.11.6"/>
    </reaction>
</comment>
<comment type="subunit">
    <text evidence="1">Heterooligomer composed of large and small subunits.</text>
</comment>
<comment type="subcellular location">
    <subcellularLocation>
        <location evidence="1">Cytoplasm</location>
    </subcellularLocation>
</comment>
<comment type="similarity">
    <text evidence="1">Belongs to the XseA family.</text>
</comment>
<protein>
    <recommendedName>
        <fullName evidence="1">Exodeoxyribonuclease 7 large subunit</fullName>
        <ecNumber evidence="1">3.1.11.6</ecNumber>
    </recommendedName>
    <alternativeName>
        <fullName evidence="1">Exodeoxyribonuclease VII large subunit</fullName>
        <shortName evidence="1">Exonuclease VII large subunit</shortName>
    </alternativeName>
</protein>
<accession>B1KT53</accession>
<organism>
    <name type="scientific">Clostridium botulinum (strain Loch Maree / Type A3)</name>
    <dbReference type="NCBI Taxonomy" id="498214"/>
    <lineage>
        <taxon>Bacteria</taxon>
        <taxon>Bacillati</taxon>
        <taxon>Bacillota</taxon>
        <taxon>Clostridia</taxon>
        <taxon>Eubacteriales</taxon>
        <taxon>Clostridiaceae</taxon>
        <taxon>Clostridium</taxon>
    </lineage>
</organism>
<dbReference type="EC" id="3.1.11.6" evidence="1"/>
<dbReference type="EMBL" id="CP000962">
    <property type="protein sequence ID" value="ACA54518.1"/>
    <property type="molecule type" value="Genomic_DNA"/>
</dbReference>
<dbReference type="RefSeq" id="WP_012342614.1">
    <property type="nucleotide sequence ID" value="NC_010520.1"/>
</dbReference>
<dbReference type="SMR" id="B1KT53"/>
<dbReference type="KEGG" id="cbl:CLK_1275"/>
<dbReference type="HOGENOM" id="CLU_023625_2_0_9"/>
<dbReference type="GO" id="GO:0005737">
    <property type="term" value="C:cytoplasm"/>
    <property type="evidence" value="ECO:0007669"/>
    <property type="project" value="UniProtKB-SubCell"/>
</dbReference>
<dbReference type="GO" id="GO:0009318">
    <property type="term" value="C:exodeoxyribonuclease VII complex"/>
    <property type="evidence" value="ECO:0007669"/>
    <property type="project" value="InterPro"/>
</dbReference>
<dbReference type="GO" id="GO:0008855">
    <property type="term" value="F:exodeoxyribonuclease VII activity"/>
    <property type="evidence" value="ECO:0007669"/>
    <property type="project" value="UniProtKB-UniRule"/>
</dbReference>
<dbReference type="GO" id="GO:0003676">
    <property type="term" value="F:nucleic acid binding"/>
    <property type="evidence" value="ECO:0007669"/>
    <property type="project" value="InterPro"/>
</dbReference>
<dbReference type="GO" id="GO:0006308">
    <property type="term" value="P:DNA catabolic process"/>
    <property type="evidence" value="ECO:0007669"/>
    <property type="project" value="UniProtKB-UniRule"/>
</dbReference>
<dbReference type="CDD" id="cd04489">
    <property type="entry name" value="ExoVII_LU_OBF"/>
    <property type="match status" value="1"/>
</dbReference>
<dbReference type="HAMAP" id="MF_00378">
    <property type="entry name" value="Exonuc_7_L"/>
    <property type="match status" value="1"/>
</dbReference>
<dbReference type="InterPro" id="IPR003753">
    <property type="entry name" value="Exonuc_VII_L"/>
</dbReference>
<dbReference type="InterPro" id="IPR020579">
    <property type="entry name" value="Exonuc_VII_lsu_C"/>
</dbReference>
<dbReference type="InterPro" id="IPR025824">
    <property type="entry name" value="OB-fold_nuc-bd_dom"/>
</dbReference>
<dbReference type="NCBIfam" id="TIGR00237">
    <property type="entry name" value="xseA"/>
    <property type="match status" value="1"/>
</dbReference>
<dbReference type="PANTHER" id="PTHR30008">
    <property type="entry name" value="EXODEOXYRIBONUCLEASE 7 LARGE SUBUNIT"/>
    <property type="match status" value="1"/>
</dbReference>
<dbReference type="PANTHER" id="PTHR30008:SF0">
    <property type="entry name" value="EXODEOXYRIBONUCLEASE 7 LARGE SUBUNIT"/>
    <property type="match status" value="1"/>
</dbReference>
<dbReference type="Pfam" id="PF02601">
    <property type="entry name" value="Exonuc_VII_L"/>
    <property type="match status" value="2"/>
</dbReference>
<dbReference type="Pfam" id="PF13742">
    <property type="entry name" value="tRNA_anti_2"/>
    <property type="match status" value="1"/>
</dbReference>
<reference key="1">
    <citation type="journal article" date="2007" name="PLoS ONE">
        <title>Analysis of the neurotoxin complex genes in Clostridium botulinum A1-A4 and B1 strains: BoNT/A3, /Ba4 and /B1 clusters are located within plasmids.</title>
        <authorList>
            <person name="Smith T.J."/>
            <person name="Hill K.K."/>
            <person name="Foley B.T."/>
            <person name="Detter J.C."/>
            <person name="Munk A.C."/>
            <person name="Bruce D.C."/>
            <person name="Doggett N.A."/>
            <person name="Smith L.A."/>
            <person name="Marks J.D."/>
            <person name="Xie G."/>
            <person name="Brettin T.S."/>
        </authorList>
    </citation>
    <scope>NUCLEOTIDE SEQUENCE [LARGE SCALE GENOMIC DNA]</scope>
    <source>
        <strain>Loch Maree / Type A3</strain>
    </source>
</reference>